<evidence type="ECO:0000250" key="1"/>
<evidence type="ECO:0000250" key="2">
    <source>
        <dbReference type="UniProtKB" id="P05023"/>
    </source>
</evidence>
<evidence type="ECO:0000250" key="3">
    <source>
        <dbReference type="UniProtKB" id="P06685"/>
    </source>
</evidence>
<evidence type="ECO:0000250" key="4">
    <source>
        <dbReference type="UniProtKB" id="Q8VDN2"/>
    </source>
</evidence>
<evidence type="ECO:0000255" key="5"/>
<evidence type="ECO:0000256" key="6">
    <source>
        <dbReference type="SAM" id="MobiDB-lite"/>
    </source>
</evidence>
<evidence type="ECO:0000305" key="7"/>
<name>AT1A1_SHEEP</name>
<accession>P04074</accession>
<sequence length="1021" mass="112658">MGKGVGRDKYEPAAVSEHGDKKKAKKERDMDELKKEVSMDDHKLSLDELHRKYGTDLNRGLTTARAAEILARDGPNALTPPPTTPEWVKFCRQLFGGFSMLLWIGAVLCFLAYGIQAATEEEPQNDNLYLGVVLSAVVIITGCFSYYQEAKSSKIMESFKNMVPQQALVIRNGEKMSINAEEVVVGDLVEVKGGDRIPADLRIISANGCKVDNSSLTGESEPQTRSPDFTNENPLETRNIAFFSTNCVEGTARGIVVYTGDRTVMGRIATLASGLEGGQTPIAAEIEHFIHIITGVAVFLGVSFFILSLILEYTWLEAVIFLIGIIVANVPEGLLATVTVCLTLTAKRMARKNCLVKNLEAVETLGSTSTICSDKTGTLTQNRMTVAHMWFDNQIHEADTTENQSGVSFDKTSATWLALSRIAGLCNRAVFQANQDNLPILKRAVAGDASESALLKCIEVCCGSVKEMRERYAKIVEIPFNSTNKYQLSIHKNANAGEPRHLLVMKGAPERILDRCSSILIHGKEQPLDEELKDAFQNAYLELGGLGERVLGFCHLMLPDEQFPEGFQFDTDDVNFPVDNLCFVGLISMIDPPRAAVPDAVGKCRSAGIKVIMVTGDHPITAKAIAKGVGIISEGNETVEDIAARLNIPVSQVNPRDARACVVHGSDLKDMTPEQLDDILKYHTEIVFARTSPQQKLIIVEGCQRQGAIVAVTGDGVNDSPALKKADIGVAMGIAGSDVSKQAADMILLDDNFASIVTGVEEGRLIFDNLKKSIAYTLTSNIPEITPFLIFIIANIPLPLGTVTILCIDLGTDMVPAISLAYEQAESDIMKRQPRNPQTDKLVNERLISMAYGQIGMIQALGGFFTYFVIMAENGFLPNHLLGIRVTWDDRWINDVEDSYGQQWTYEQRKIVEFTCHTAFFVSIVVVQWADLVICKTRRNSVFQQGMKNKILIFGLFEETALAAFLSYCPGMGVALRMYPLKPTWWFCAFPYSLLIFVYDEVRKLIIRRRPGGWVEKETYY</sequence>
<keyword id="KW-0007">Acetylation</keyword>
<keyword id="KW-0067">ATP-binding</keyword>
<keyword id="KW-1003">Cell membrane</keyword>
<keyword id="KW-0966">Cell projection</keyword>
<keyword id="KW-0903">Direct protein sequencing</keyword>
<keyword id="KW-0406">Ion transport</keyword>
<keyword id="KW-0460">Magnesium</keyword>
<keyword id="KW-0472">Membrane</keyword>
<keyword id="KW-0479">Metal-binding</keyword>
<keyword id="KW-0547">Nucleotide-binding</keyword>
<keyword id="KW-0597">Phosphoprotein</keyword>
<keyword id="KW-0630">Potassium</keyword>
<keyword id="KW-0633">Potassium transport</keyword>
<keyword id="KW-1185">Reference proteome</keyword>
<keyword id="KW-0915">Sodium</keyword>
<keyword id="KW-0739">Sodium transport</keyword>
<keyword id="KW-0740">Sodium/potassium transport</keyword>
<keyword id="KW-1278">Translocase</keyword>
<keyword id="KW-0812">Transmembrane</keyword>
<keyword id="KW-1133">Transmembrane helix</keyword>
<keyword id="KW-0813">Transport</keyword>
<comment type="function">
    <text evidence="2 4">This is the catalytic component of the active enzyme, which catalyzes the hydrolysis of ATP coupled with the exchange of sodium and potassium ions across the plasma membrane. This action creates the electrochemical gradient of sodium and potassium ions, providing the energy for active transport of various nutrients (By similarity). Could also be part of an osmosensory signaling pathway that senses body-fluid sodium levels and controls salt intake behavior as well as voluntary water intake to regulate sodium homeostasis (By similarity).</text>
</comment>
<comment type="catalytic activity">
    <reaction>
        <text>K(+)(out) + Na(+)(in) + ATP + H2O = K(+)(in) + Na(+)(out) + ADP + phosphate + H(+)</text>
        <dbReference type="Rhea" id="RHEA:18353"/>
        <dbReference type="ChEBI" id="CHEBI:15377"/>
        <dbReference type="ChEBI" id="CHEBI:15378"/>
        <dbReference type="ChEBI" id="CHEBI:29101"/>
        <dbReference type="ChEBI" id="CHEBI:29103"/>
        <dbReference type="ChEBI" id="CHEBI:30616"/>
        <dbReference type="ChEBI" id="CHEBI:43474"/>
        <dbReference type="ChEBI" id="CHEBI:456216"/>
        <dbReference type="EC" id="7.2.2.13"/>
    </reaction>
</comment>
<comment type="activity regulation">
    <text>Specifically inhibited by cardiac glycosides such as digoxin or ouabain.</text>
</comment>
<comment type="subunit">
    <text evidence="2 3 4">The sodium/potassium-transporting ATPase is composed of a catalytic alpha subunit, an auxiliary non-catalytic beta subunit and an additional regulatory subunit. Interacts with regulatory subunit FXYD1. Interacts with regulatory subunit FXYD3. Interacts with SIK1. Interacts with SLC35G1 and STIM1. Interacts with CLN3; this interaction regulates the sodium/potassium-transporting ATPase complex localization at the plasma membrane (By similarity). Interacts with SCN7A; activates ATP1A1 P-type sodium:potassium-exchanging transporter activity which indirectly signals to nearby neurons to regulate sodium homeostasis (By similarity).</text>
</comment>
<comment type="subcellular location">
    <subcellularLocation>
        <location evidence="4">Cell membrane</location>
        <topology evidence="5">Multi-pass membrane protein</topology>
    </subcellularLocation>
    <subcellularLocation>
        <location evidence="3">Basolateral cell membrane</location>
        <topology evidence="5">Multi-pass membrane protein</topology>
    </subcellularLocation>
    <subcellularLocation>
        <location evidence="2">Cell membrane</location>
        <location evidence="2">Sarcolemma</location>
        <topology evidence="5">Multi-pass membrane protein</topology>
    </subcellularLocation>
    <subcellularLocation>
        <location evidence="3">Cell projection</location>
        <location evidence="3">Axon</location>
    </subcellularLocation>
    <subcellularLocation>
        <location evidence="2">Melanosome</location>
    </subcellularLocation>
</comment>
<comment type="PTM">
    <text evidence="1">Phosphorylation on Tyr-10 modulates pumping activity. Phosphorylation of Ser-941 by PKA modulates the response of ATP1A1 to PKC (By similarity). Dephosphorylation by protein phosphatase 2A (PP2A) following increases in intracellular sodium, leading to increase catalytic activity (By similarity).</text>
</comment>
<comment type="similarity">
    <text evidence="7">Belongs to the cation transport ATPase (P-type) (TC 3.A.3) family. Type IIC subfamily.</text>
</comment>
<feature type="propeptide" id="PRO_0000002491" evidence="1">
    <location>
        <begin position="1"/>
        <end position="5"/>
    </location>
</feature>
<feature type="chain" id="PRO_0000002492" description="Sodium/potassium-transporting ATPase subunit alpha-1">
    <location>
        <begin position="6"/>
        <end position="1021"/>
    </location>
</feature>
<feature type="topological domain" description="Cytoplasmic" evidence="5">
    <location>
        <begin position="6"/>
        <end position="85"/>
    </location>
</feature>
<feature type="transmembrane region" description="Helical" evidence="5">
    <location>
        <begin position="86"/>
        <end position="106"/>
    </location>
</feature>
<feature type="topological domain" description="Extracellular" evidence="5">
    <location>
        <begin position="107"/>
        <end position="129"/>
    </location>
</feature>
<feature type="transmembrane region" description="Helical" evidence="5">
    <location>
        <begin position="130"/>
        <end position="150"/>
    </location>
</feature>
<feature type="topological domain" description="Cytoplasmic" evidence="5">
    <location>
        <begin position="151"/>
        <end position="286"/>
    </location>
</feature>
<feature type="transmembrane region" description="Helical" evidence="5">
    <location>
        <begin position="287"/>
        <end position="306"/>
    </location>
</feature>
<feature type="topological domain" description="Extracellular" evidence="5">
    <location>
        <begin position="307"/>
        <end position="318"/>
    </location>
</feature>
<feature type="transmembrane region" description="Helical" evidence="5">
    <location>
        <begin position="319"/>
        <end position="336"/>
    </location>
</feature>
<feature type="topological domain" description="Cytoplasmic" evidence="5">
    <location>
        <begin position="337"/>
        <end position="770"/>
    </location>
</feature>
<feature type="transmembrane region" description="Helical" evidence="5">
    <location>
        <begin position="771"/>
        <end position="790"/>
    </location>
</feature>
<feature type="topological domain" description="Extracellular" evidence="5">
    <location>
        <begin position="791"/>
        <end position="800"/>
    </location>
</feature>
<feature type="transmembrane region" description="Helical" evidence="5">
    <location>
        <begin position="801"/>
        <end position="821"/>
    </location>
</feature>
<feature type="topological domain" description="Cytoplasmic" evidence="5">
    <location>
        <begin position="822"/>
        <end position="841"/>
    </location>
</feature>
<feature type="transmembrane region" description="Helical" evidence="5">
    <location>
        <begin position="842"/>
        <end position="864"/>
    </location>
</feature>
<feature type="topological domain" description="Extracellular" evidence="5">
    <location>
        <begin position="865"/>
        <end position="916"/>
    </location>
</feature>
<feature type="transmembrane region" description="Helical" evidence="5">
    <location>
        <begin position="917"/>
        <end position="936"/>
    </location>
</feature>
<feature type="topological domain" description="Cytoplasmic" evidence="5">
    <location>
        <begin position="937"/>
        <end position="949"/>
    </location>
</feature>
<feature type="transmembrane region" description="Helical" evidence="5">
    <location>
        <begin position="950"/>
        <end position="968"/>
    </location>
</feature>
<feature type="topological domain" description="Extracellular" evidence="5">
    <location>
        <begin position="969"/>
        <end position="983"/>
    </location>
</feature>
<feature type="transmembrane region" description="Helical" evidence="5">
    <location>
        <begin position="984"/>
        <end position="1004"/>
    </location>
</feature>
<feature type="topological domain" description="Cytoplasmic" evidence="5">
    <location>
        <begin position="1005"/>
        <end position="1021"/>
    </location>
</feature>
<feature type="region of interest" description="Disordered" evidence="6">
    <location>
        <begin position="1"/>
        <end position="36"/>
    </location>
</feature>
<feature type="region of interest" description="Phosphoinositide-3 kinase binding" evidence="1">
    <location>
        <begin position="80"/>
        <end position="82"/>
    </location>
</feature>
<feature type="region of interest" description="Mediates interaction with SCN7A" evidence="4">
    <location>
        <begin position="594"/>
        <end position="715"/>
    </location>
</feature>
<feature type="compositionally biased region" description="Basic and acidic residues" evidence="6">
    <location>
        <begin position="1"/>
        <end position="11"/>
    </location>
</feature>
<feature type="compositionally biased region" description="Basic and acidic residues" evidence="6">
    <location>
        <begin position="26"/>
        <end position="36"/>
    </location>
</feature>
<feature type="active site" description="4-aspartylphosphate intermediate" evidence="1">
    <location>
        <position position="374"/>
    </location>
</feature>
<feature type="binding site" evidence="1">
    <location>
        <position position="485"/>
    </location>
    <ligand>
        <name>ATP</name>
        <dbReference type="ChEBI" id="CHEBI:30616"/>
    </ligand>
</feature>
<feature type="binding site" evidence="1">
    <location>
        <position position="715"/>
    </location>
    <ligand>
        <name>Mg(2+)</name>
        <dbReference type="ChEBI" id="CHEBI:18420"/>
    </ligand>
</feature>
<feature type="binding site" evidence="1">
    <location>
        <position position="719"/>
    </location>
    <ligand>
        <name>Mg(2+)</name>
        <dbReference type="ChEBI" id="CHEBI:18420"/>
    </ligand>
</feature>
<feature type="modified residue" description="N6-acetyllysine" evidence="4">
    <location>
        <position position="9"/>
    </location>
</feature>
<feature type="modified residue" description="Phosphotyrosine" evidence="3">
    <location>
        <position position="10"/>
    </location>
</feature>
<feature type="modified residue" description="Phosphoserine; by PKC" evidence="3">
    <location>
        <position position="16"/>
    </location>
</feature>
<feature type="modified residue" description="N6-acetyllysine" evidence="4">
    <location>
        <position position="21"/>
    </location>
</feature>
<feature type="modified residue" description="Phosphoserine" evidence="3">
    <location>
        <position position="38"/>
    </location>
</feature>
<feature type="modified residue" description="Phosphoserine" evidence="3">
    <location>
        <position position="45"/>
    </location>
</feature>
<feature type="modified residue" description="Phosphoserine" evidence="4">
    <location>
        <position position="226"/>
    </location>
</feature>
<feature type="modified residue" description="Phosphotyrosine" evidence="4">
    <location>
        <position position="258"/>
    </location>
</feature>
<feature type="modified residue" description="Phosphoserine" evidence="3">
    <location>
        <position position="450"/>
    </location>
</feature>
<feature type="modified residue" description="Phosphoserine" evidence="3">
    <location>
        <position position="482"/>
    </location>
</feature>
<feature type="modified residue" description="Phosphotyrosine" evidence="2">
    <location>
        <position position="540"/>
    </location>
</feature>
<feature type="modified residue" description="Phosphoserine" evidence="4">
    <location>
        <position position="666"/>
    </location>
</feature>
<feature type="modified residue" description="Phosphoserine; by PKA" evidence="3">
    <location>
        <position position="941"/>
    </location>
</feature>
<protein>
    <recommendedName>
        <fullName>Sodium/potassium-transporting ATPase subunit alpha-1</fullName>
        <shortName>Na(+)/K(+) ATPase alpha-1 subunit</shortName>
        <ecNumber>7.2.2.13</ecNumber>
    </recommendedName>
    <alternativeName>
        <fullName>Sodium pump subunit alpha-1</fullName>
    </alternativeName>
</protein>
<gene>
    <name type="primary">ATP1A1</name>
</gene>
<dbReference type="EC" id="7.2.2.13"/>
<dbReference type="EMBL" id="X02813">
    <property type="protein sequence ID" value="CAA26581.1"/>
    <property type="molecule type" value="mRNA"/>
</dbReference>
<dbReference type="EMBL" id="X02813">
    <property type="protein sequence ID" value="CAA26582.1"/>
    <property type="molecule type" value="mRNA"/>
</dbReference>
<dbReference type="PIR" id="A01074">
    <property type="entry name" value="PWSHNA"/>
</dbReference>
<dbReference type="RefSeq" id="NP_001009360.1">
    <property type="nucleotide sequence ID" value="NM_001009360.1"/>
</dbReference>
<dbReference type="BMRB" id="P04074"/>
<dbReference type="SMR" id="P04074"/>
<dbReference type="STRING" id="9940.ENSOARP00000021706"/>
<dbReference type="PaxDb" id="9940-ENSOARP00000021706"/>
<dbReference type="Ensembl" id="ENSOART00040033925">
    <property type="protein sequence ID" value="ENSOARP00040017501"/>
    <property type="gene ID" value="ENSOARG00040020382"/>
</dbReference>
<dbReference type="Ensembl" id="ENSOART00180019030">
    <property type="protein sequence ID" value="ENSOARP00180009701"/>
    <property type="gene ID" value="ENSOARG00180011640"/>
</dbReference>
<dbReference type="Ensembl" id="ENSOART00215088440">
    <property type="protein sequence ID" value="ENSOARP00215048530"/>
    <property type="gene ID" value="ENSOARG00215052135"/>
</dbReference>
<dbReference type="Ensembl" id="ENSOART00220076574">
    <property type="protein sequence ID" value="ENSOARP00220041167"/>
    <property type="gene ID" value="ENSOARG00220045707"/>
</dbReference>
<dbReference type="Ensembl" id="ENSOART00225071944">
    <property type="protein sequence ID" value="ENSOARP00225036575"/>
    <property type="gene ID" value="ENSOARG00225043468"/>
</dbReference>
<dbReference type="Ensembl" id="ENSOART00260002191">
    <property type="protein sequence ID" value="ENSOARP00260001410"/>
    <property type="gene ID" value="ENSOARG00260001237"/>
</dbReference>
<dbReference type="GeneID" id="443381"/>
<dbReference type="KEGG" id="oas:443381"/>
<dbReference type="CTD" id="476"/>
<dbReference type="eggNOG" id="KOG0203">
    <property type="taxonomic scope" value="Eukaryota"/>
</dbReference>
<dbReference type="HOGENOM" id="CLU_002360_4_3_1"/>
<dbReference type="OMA" id="QQPPIFN"/>
<dbReference type="OrthoDB" id="3352408at2759"/>
<dbReference type="Proteomes" id="UP000002356">
    <property type="component" value="Chromosome 1"/>
</dbReference>
<dbReference type="Bgee" id="ENSOARG00000020213">
    <property type="expression patterns" value="Expressed in adult mammalian kidney and 54 other cell types or tissues"/>
</dbReference>
<dbReference type="ExpressionAtlas" id="P04074">
    <property type="expression patterns" value="baseline"/>
</dbReference>
<dbReference type="GO" id="GO:0030424">
    <property type="term" value="C:axon"/>
    <property type="evidence" value="ECO:0007669"/>
    <property type="project" value="UniProtKB-SubCell"/>
</dbReference>
<dbReference type="GO" id="GO:0016323">
    <property type="term" value="C:basolateral plasma membrane"/>
    <property type="evidence" value="ECO:0000250"/>
    <property type="project" value="UniProtKB"/>
</dbReference>
<dbReference type="GO" id="GO:0042470">
    <property type="term" value="C:melanosome"/>
    <property type="evidence" value="ECO:0007669"/>
    <property type="project" value="UniProtKB-SubCell"/>
</dbReference>
<dbReference type="GO" id="GO:0016020">
    <property type="term" value="C:membrane"/>
    <property type="evidence" value="ECO:0000250"/>
    <property type="project" value="UniProtKB"/>
</dbReference>
<dbReference type="GO" id="GO:0005886">
    <property type="term" value="C:plasma membrane"/>
    <property type="evidence" value="ECO:0000250"/>
    <property type="project" value="UniProtKB"/>
</dbReference>
<dbReference type="GO" id="GO:0042383">
    <property type="term" value="C:sarcolemma"/>
    <property type="evidence" value="ECO:0007669"/>
    <property type="project" value="UniProtKB-SubCell"/>
</dbReference>
<dbReference type="GO" id="GO:0005890">
    <property type="term" value="C:sodium:potassium-exchanging ATPase complex"/>
    <property type="evidence" value="ECO:0007669"/>
    <property type="project" value="TreeGrafter"/>
</dbReference>
<dbReference type="GO" id="GO:0005524">
    <property type="term" value="F:ATP binding"/>
    <property type="evidence" value="ECO:0007669"/>
    <property type="project" value="UniProtKB-KW"/>
</dbReference>
<dbReference type="GO" id="GO:0016887">
    <property type="term" value="F:ATP hydrolysis activity"/>
    <property type="evidence" value="ECO:0007669"/>
    <property type="project" value="InterPro"/>
</dbReference>
<dbReference type="GO" id="GO:0046872">
    <property type="term" value="F:metal ion binding"/>
    <property type="evidence" value="ECO:0007669"/>
    <property type="project" value="UniProtKB-KW"/>
</dbReference>
<dbReference type="GO" id="GO:0005391">
    <property type="term" value="F:P-type sodium:potassium-exchanging transporter activity"/>
    <property type="evidence" value="ECO:0000250"/>
    <property type="project" value="UniProtKB"/>
</dbReference>
<dbReference type="GO" id="GO:0030007">
    <property type="term" value="P:intracellular potassium ion homeostasis"/>
    <property type="evidence" value="ECO:0007669"/>
    <property type="project" value="TreeGrafter"/>
</dbReference>
<dbReference type="GO" id="GO:0006883">
    <property type="term" value="P:intracellular sodium ion homeostasis"/>
    <property type="evidence" value="ECO:0007669"/>
    <property type="project" value="TreeGrafter"/>
</dbReference>
<dbReference type="GO" id="GO:1990573">
    <property type="term" value="P:potassium ion import across plasma membrane"/>
    <property type="evidence" value="ECO:0007669"/>
    <property type="project" value="TreeGrafter"/>
</dbReference>
<dbReference type="GO" id="GO:1902600">
    <property type="term" value="P:proton transmembrane transport"/>
    <property type="evidence" value="ECO:0007669"/>
    <property type="project" value="TreeGrafter"/>
</dbReference>
<dbReference type="GO" id="GO:0002028">
    <property type="term" value="P:regulation of sodium ion transport"/>
    <property type="evidence" value="ECO:0000250"/>
    <property type="project" value="UniProtKB"/>
</dbReference>
<dbReference type="GO" id="GO:0036376">
    <property type="term" value="P:sodium ion export across plasma membrane"/>
    <property type="evidence" value="ECO:0007669"/>
    <property type="project" value="TreeGrafter"/>
</dbReference>
<dbReference type="CDD" id="cd02608">
    <property type="entry name" value="P-type_ATPase_Na-K_like"/>
    <property type="match status" value="1"/>
</dbReference>
<dbReference type="FunFam" id="1.20.1110.10:FF:000163">
    <property type="match status" value="1"/>
</dbReference>
<dbReference type="FunFam" id="2.70.150.10:FF:000106">
    <property type="entry name" value="Sodium/potassium-transporting ATPase subunit alpha"/>
    <property type="match status" value="1"/>
</dbReference>
<dbReference type="FunFam" id="3.40.1110.10:FF:000001">
    <property type="entry name" value="Sodium/potassium-transporting ATPase subunit alpha"/>
    <property type="match status" value="1"/>
</dbReference>
<dbReference type="FunFam" id="3.40.50.1000:FF:000004">
    <property type="entry name" value="Sodium/potassium-transporting ATPase subunit alpha"/>
    <property type="match status" value="1"/>
</dbReference>
<dbReference type="FunFam" id="1.20.1110.10:FF:000095">
    <property type="entry name" value="Sodium/potassium-transporting ATPase subunit alpha-1"/>
    <property type="match status" value="2"/>
</dbReference>
<dbReference type="Gene3D" id="3.40.1110.10">
    <property type="entry name" value="Calcium-transporting ATPase, cytoplasmic domain N"/>
    <property type="match status" value="1"/>
</dbReference>
<dbReference type="Gene3D" id="2.70.150.10">
    <property type="entry name" value="Calcium-transporting ATPase, cytoplasmic transduction domain A"/>
    <property type="match status" value="1"/>
</dbReference>
<dbReference type="Gene3D" id="1.20.1110.10">
    <property type="entry name" value="Calcium-transporting ATPase, transmembrane domain"/>
    <property type="match status" value="1"/>
</dbReference>
<dbReference type="Gene3D" id="3.40.50.1000">
    <property type="entry name" value="HAD superfamily/HAD-like"/>
    <property type="match status" value="1"/>
</dbReference>
<dbReference type="InterPro" id="IPR006068">
    <property type="entry name" value="ATPase_P-typ_cation-transptr_C"/>
</dbReference>
<dbReference type="InterPro" id="IPR004014">
    <property type="entry name" value="ATPase_P-typ_cation-transptr_N"/>
</dbReference>
<dbReference type="InterPro" id="IPR023299">
    <property type="entry name" value="ATPase_P-typ_cyto_dom_N"/>
</dbReference>
<dbReference type="InterPro" id="IPR018303">
    <property type="entry name" value="ATPase_P-typ_P_site"/>
</dbReference>
<dbReference type="InterPro" id="IPR023298">
    <property type="entry name" value="ATPase_P-typ_TM_dom_sf"/>
</dbReference>
<dbReference type="InterPro" id="IPR008250">
    <property type="entry name" value="ATPase_P-typ_transduc_dom_A_sf"/>
</dbReference>
<dbReference type="InterPro" id="IPR050510">
    <property type="entry name" value="Cation_transp_ATPase_P-type"/>
</dbReference>
<dbReference type="InterPro" id="IPR036412">
    <property type="entry name" value="HAD-like_sf"/>
</dbReference>
<dbReference type="InterPro" id="IPR023214">
    <property type="entry name" value="HAD_sf"/>
</dbReference>
<dbReference type="InterPro" id="IPR005775">
    <property type="entry name" value="P-type_ATPase_IIC"/>
</dbReference>
<dbReference type="InterPro" id="IPR001757">
    <property type="entry name" value="P_typ_ATPase"/>
</dbReference>
<dbReference type="InterPro" id="IPR044492">
    <property type="entry name" value="P_typ_ATPase_HD_dom"/>
</dbReference>
<dbReference type="NCBIfam" id="TIGR01106">
    <property type="entry name" value="ATPase-IIC_X-K"/>
    <property type="match status" value="1"/>
</dbReference>
<dbReference type="NCBIfam" id="TIGR01494">
    <property type="entry name" value="ATPase_P-type"/>
    <property type="match status" value="2"/>
</dbReference>
<dbReference type="PANTHER" id="PTHR43294">
    <property type="entry name" value="SODIUM/POTASSIUM-TRANSPORTING ATPASE SUBUNIT ALPHA"/>
    <property type="match status" value="1"/>
</dbReference>
<dbReference type="PANTHER" id="PTHR43294:SF9">
    <property type="entry name" value="SODIUM_POTASSIUM-TRANSPORTING ATPASE SUBUNIT ALPHA-1"/>
    <property type="match status" value="1"/>
</dbReference>
<dbReference type="Pfam" id="PF13246">
    <property type="entry name" value="Cation_ATPase"/>
    <property type="match status" value="1"/>
</dbReference>
<dbReference type="Pfam" id="PF00689">
    <property type="entry name" value="Cation_ATPase_C"/>
    <property type="match status" value="1"/>
</dbReference>
<dbReference type="Pfam" id="PF00690">
    <property type="entry name" value="Cation_ATPase_N"/>
    <property type="match status" value="1"/>
</dbReference>
<dbReference type="Pfam" id="PF00122">
    <property type="entry name" value="E1-E2_ATPase"/>
    <property type="match status" value="1"/>
</dbReference>
<dbReference type="PRINTS" id="PR00119">
    <property type="entry name" value="CATATPASE"/>
</dbReference>
<dbReference type="PRINTS" id="PR00121">
    <property type="entry name" value="NAKATPASE"/>
</dbReference>
<dbReference type="SFLD" id="SFLDS00003">
    <property type="entry name" value="Haloacid_Dehalogenase"/>
    <property type="match status" value="1"/>
</dbReference>
<dbReference type="SFLD" id="SFLDF00027">
    <property type="entry name" value="p-type_atpase"/>
    <property type="match status" value="1"/>
</dbReference>
<dbReference type="SMART" id="SM00831">
    <property type="entry name" value="Cation_ATPase_N"/>
    <property type="match status" value="1"/>
</dbReference>
<dbReference type="SUPFAM" id="SSF81653">
    <property type="entry name" value="Calcium ATPase, transduction domain A"/>
    <property type="match status" value="1"/>
</dbReference>
<dbReference type="SUPFAM" id="SSF81665">
    <property type="entry name" value="Calcium ATPase, transmembrane domain M"/>
    <property type="match status" value="1"/>
</dbReference>
<dbReference type="SUPFAM" id="SSF56784">
    <property type="entry name" value="HAD-like"/>
    <property type="match status" value="1"/>
</dbReference>
<dbReference type="SUPFAM" id="SSF81660">
    <property type="entry name" value="Metal cation-transporting ATPase, ATP-binding domain N"/>
    <property type="match status" value="1"/>
</dbReference>
<dbReference type="PROSITE" id="PS00154">
    <property type="entry name" value="ATPASE_E1_E2"/>
    <property type="match status" value="1"/>
</dbReference>
<reference key="1">
    <citation type="journal article" date="1985" name="Nature">
        <title>Amino-acid sequence of the catalytic subunit of the (Na+ + K+)ATPase deduced from a complementary DNA.</title>
        <authorList>
            <person name="Shull G.E."/>
            <person name="Schwartz A."/>
            <person name="Lingrel J.B."/>
        </authorList>
    </citation>
    <scope>NUCLEOTIDE SEQUENCE [MRNA]</scope>
    <source>
        <tissue>Kidney</tissue>
    </source>
</reference>
<reference key="2">
    <citation type="journal article" date="1990" name="J. Biol. Chem.">
        <title>Lysine 480 is an essential residue in the putative ATP site of lamb kidney (Na,K)-ATPase. Identification of the pyridoxal 5'-diphospho-5'-adenosine and pyridoxal phosphate reactive residue.</title>
        <authorList>
            <person name="Hinz H.R."/>
            <person name="Kirley T.L."/>
        </authorList>
    </citation>
    <scope>PROTEIN SEQUENCE OF 475-492</scope>
</reference>
<organism>
    <name type="scientific">Ovis aries</name>
    <name type="common">Sheep</name>
    <dbReference type="NCBI Taxonomy" id="9940"/>
    <lineage>
        <taxon>Eukaryota</taxon>
        <taxon>Metazoa</taxon>
        <taxon>Chordata</taxon>
        <taxon>Craniata</taxon>
        <taxon>Vertebrata</taxon>
        <taxon>Euteleostomi</taxon>
        <taxon>Mammalia</taxon>
        <taxon>Eutheria</taxon>
        <taxon>Laurasiatheria</taxon>
        <taxon>Artiodactyla</taxon>
        <taxon>Ruminantia</taxon>
        <taxon>Pecora</taxon>
        <taxon>Bovidae</taxon>
        <taxon>Caprinae</taxon>
        <taxon>Ovis</taxon>
    </lineage>
</organism>
<proteinExistence type="evidence at protein level"/>